<protein>
    <recommendedName>
        <fullName evidence="1">Ribosomal RNA small subunit methyltransferase G</fullName>
        <ecNumber evidence="1">2.1.1.-</ecNumber>
    </recommendedName>
    <alternativeName>
        <fullName evidence="1">16S rRNA 7-methylguanosine methyltransferase</fullName>
        <shortName evidence="1">16S rRNA m7G methyltransferase</shortName>
    </alternativeName>
</protein>
<feature type="chain" id="PRO_0000184341" description="Ribosomal RNA small subunit methyltransferase G">
    <location>
        <begin position="1"/>
        <end position="237"/>
    </location>
</feature>
<feature type="region of interest" description="Disordered" evidence="2">
    <location>
        <begin position="218"/>
        <end position="237"/>
    </location>
</feature>
<feature type="binding site" evidence="1">
    <location>
        <position position="78"/>
    </location>
    <ligand>
        <name>S-adenosyl-L-methionine</name>
        <dbReference type="ChEBI" id="CHEBI:59789"/>
    </ligand>
</feature>
<feature type="binding site" evidence="1">
    <location>
        <position position="83"/>
    </location>
    <ligand>
        <name>S-adenosyl-L-methionine</name>
        <dbReference type="ChEBI" id="CHEBI:59789"/>
    </ligand>
</feature>
<feature type="binding site" evidence="1">
    <location>
        <begin position="129"/>
        <end position="130"/>
    </location>
    <ligand>
        <name>S-adenosyl-L-methionine</name>
        <dbReference type="ChEBI" id="CHEBI:59789"/>
    </ligand>
</feature>
<feature type="binding site" evidence="1">
    <location>
        <position position="148"/>
    </location>
    <ligand>
        <name>S-adenosyl-L-methionine</name>
        <dbReference type="ChEBI" id="CHEBI:59789"/>
    </ligand>
</feature>
<gene>
    <name evidence="1" type="primary">rsmG</name>
    <name type="ordered locus">spr1164</name>
</gene>
<proteinExistence type="inferred from homology"/>
<keyword id="KW-0963">Cytoplasm</keyword>
<keyword id="KW-0489">Methyltransferase</keyword>
<keyword id="KW-1185">Reference proteome</keyword>
<keyword id="KW-0698">rRNA processing</keyword>
<keyword id="KW-0949">S-adenosyl-L-methionine</keyword>
<keyword id="KW-0808">Transferase</keyword>
<comment type="function">
    <text evidence="1">Specifically methylates the N7 position of a guanine in 16S rRNA.</text>
</comment>
<comment type="subcellular location">
    <subcellularLocation>
        <location evidence="1">Cytoplasm</location>
    </subcellularLocation>
</comment>
<comment type="similarity">
    <text evidence="1">Belongs to the methyltransferase superfamily. RNA methyltransferase RsmG family.</text>
</comment>
<comment type="sequence caution" evidence="3">
    <conflict type="erroneous initiation">
        <sequence resource="EMBL-CDS" id="AAK99967"/>
    </conflict>
</comment>
<organism>
    <name type="scientific">Streptococcus pneumoniae (strain ATCC BAA-255 / R6)</name>
    <dbReference type="NCBI Taxonomy" id="171101"/>
    <lineage>
        <taxon>Bacteria</taxon>
        <taxon>Bacillati</taxon>
        <taxon>Bacillota</taxon>
        <taxon>Bacilli</taxon>
        <taxon>Lactobacillales</taxon>
        <taxon>Streptococcaceae</taxon>
        <taxon>Streptococcus</taxon>
    </lineage>
</organism>
<name>RSMG_STRR6</name>
<accession>Q8DPH3</accession>
<evidence type="ECO:0000255" key="1">
    <source>
        <dbReference type="HAMAP-Rule" id="MF_00074"/>
    </source>
</evidence>
<evidence type="ECO:0000256" key="2">
    <source>
        <dbReference type="SAM" id="MobiDB-lite"/>
    </source>
</evidence>
<evidence type="ECO:0000305" key="3"/>
<dbReference type="EC" id="2.1.1.-" evidence="1"/>
<dbReference type="EMBL" id="AE007317">
    <property type="protein sequence ID" value="AAK99967.1"/>
    <property type="status" value="ALT_INIT"/>
    <property type="molecule type" value="Genomic_DNA"/>
</dbReference>
<dbReference type="PIR" id="C98017">
    <property type="entry name" value="C98017"/>
</dbReference>
<dbReference type="RefSeq" id="NP_358757.1">
    <property type="nucleotide sequence ID" value="NC_003098.1"/>
</dbReference>
<dbReference type="RefSeq" id="WP_000801941.1">
    <property type="nucleotide sequence ID" value="NC_003098.1"/>
</dbReference>
<dbReference type="SMR" id="Q8DPH3"/>
<dbReference type="STRING" id="171101.spr1164"/>
<dbReference type="KEGG" id="spr:spr1164"/>
<dbReference type="PATRIC" id="fig|171101.6.peg.1262"/>
<dbReference type="eggNOG" id="COG0357">
    <property type="taxonomic scope" value="Bacteria"/>
</dbReference>
<dbReference type="HOGENOM" id="CLU_065341_0_2_9"/>
<dbReference type="Proteomes" id="UP000000586">
    <property type="component" value="Chromosome"/>
</dbReference>
<dbReference type="GO" id="GO:0005829">
    <property type="term" value="C:cytosol"/>
    <property type="evidence" value="ECO:0000318"/>
    <property type="project" value="GO_Central"/>
</dbReference>
<dbReference type="GO" id="GO:0070043">
    <property type="term" value="F:rRNA (guanine-N7-)-methyltransferase activity"/>
    <property type="evidence" value="ECO:0000318"/>
    <property type="project" value="GO_Central"/>
</dbReference>
<dbReference type="CDD" id="cd02440">
    <property type="entry name" value="AdoMet_MTases"/>
    <property type="match status" value="1"/>
</dbReference>
<dbReference type="FunFam" id="3.40.50.150:FF:000041">
    <property type="entry name" value="Ribosomal RNA small subunit methyltransferase G"/>
    <property type="match status" value="1"/>
</dbReference>
<dbReference type="Gene3D" id="3.40.50.150">
    <property type="entry name" value="Vaccinia Virus protein VP39"/>
    <property type="match status" value="1"/>
</dbReference>
<dbReference type="HAMAP" id="MF_00074">
    <property type="entry name" value="16SrRNA_methyltr_G"/>
    <property type="match status" value="1"/>
</dbReference>
<dbReference type="InterPro" id="IPR003682">
    <property type="entry name" value="rRNA_ssu_MeTfrase_G"/>
</dbReference>
<dbReference type="InterPro" id="IPR029063">
    <property type="entry name" value="SAM-dependent_MTases_sf"/>
</dbReference>
<dbReference type="NCBIfam" id="TIGR00138">
    <property type="entry name" value="rsmG_gidB"/>
    <property type="match status" value="1"/>
</dbReference>
<dbReference type="PANTHER" id="PTHR31760">
    <property type="entry name" value="S-ADENOSYL-L-METHIONINE-DEPENDENT METHYLTRANSFERASES SUPERFAMILY PROTEIN"/>
    <property type="match status" value="1"/>
</dbReference>
<dbReference type="PANTHER" id="PTHR31760:SF0">
    <property type="entry name" value="S-ADENOSYL-L-METHIONINE-DEPENDENT METHYLTRANSFERASES SUPERFAMILY PROTEIN"/>
    <property type="match status" value="1"/>
</dbReference>
<dbReference type="Pfam" id="PF02527">
    <property type="entry name" value="GidB"/>
    <property type="match status" value="1"/>
</dbReference>
<dbReference type="PIRSF" id="PIRSF003078">
    <property type="entry name" value="GidB"/>
    <property type="match status" value="1"/>
</dbReference>
<dbReference type="SUPFAM" id="SSF53335">
    <property type="entry name" value="S-adenosyl-L-methionine-dependent methyltransferases"/>
    <property type="match status" value="1"/>
</dbReference>
<reference key="1">
    <citation type="journal article" date="2001" name="J. Bacteriol.">
        <title>Genome of the bacterium Streptococcus pneumoniae strain R6.</title>
        <authorList>
            <person name="Hoskins J."/>
            <person name="Alborn W.E. Jr."/>
            <person name="Arnold J."/>
            <person name="Blaszczak L.C."/>
            <person name="Burgett S."/>
            <person name="DeHoff B.S."/>
            <person name="Estrem S.T."/>
            <person name="Fritz L."/>
            <person name="Fu D.-J."/>
            <person name="Fuller W."/>
            <person name="Geringer C."/>
            <person name="Gilmour R."/>
            <person name="Glass J.S."/>
            <person name="Khoja H."/>
            <person name="Kraft A.R."/>
            <person name="Lagace R.E."/>
            <person name="LeBlanc D.J."/>
            <person name="Lee L.N."/>
            <person name="Lefkowitz E.J."/>
            <person name="Lu J."/>
            <person name="Matsushima P."/>
            <person name="McAhren S.M."/>
            <person name="McHenney M."/>
            <person name="McLeaster K."/>
            <person name="Mundy C.W."/>
            <person name="Nicas T.I."/>
            <person name="Norris F.H."/>
            <person name="O'Gara M."/>
            <person name="Peery R.B."/>
            <person name="Robertson G.T."/>
            <person name="Rockey P."/>
            <person name="Sun P.-M."/>
            <person name="Winkler M.E."/>
            <person name="Yang Y."/>
            <person name="Young-Bellido M."/>
            <person name="Zhao G."/>
            <person name="Zook C.A."/>
            <person name="Baltz R.H."/>
            <person name="Jaskunas S.R."/>
            <person name="Rosteck P.R. Jr."/>
            <person name="Skatrud P.L."/>
            <person name="Glass J.I."/>
        </authorList>
    </citation>
    <scope>NUCLEOTIDE SEQUENCE [LARGE SCALE GENOMIC DNA]</scope>
    <source>
        <strain>ATCC BAA-255 / R6</strain>
    </source>
</reference>
<sequence>MKPETFYNLLAEQNLPLSNQQKEQFERYFELLVEWNEKINLTAITDKEEVYLKHFYDSIAPILQGLIPNETIKLLDIGAGAGFPSLPMKILYPELDVTIIDSLNKRINFLQLLAQELDLNGVHFYHGRAEDFAQDKNFRAQYDFVTARAVARMQVLSELTIPYLKVGGKLLALKASNAPEELLEAKNALNLLFSKVEDNLSYALPNRDPRYITVVEKKKETPNKYPRKAGMPNKRPL</sequence>